<keyword id="KW-0067">ATP-binding</keyword>
<keyword id="KW-0315">Glutamine amidotransferase</keyword>
<keyword id="KW-0436">Ligase</keyword>
<keyword id="KW-0460">Magnesium</keyword>
<keyword id="KW-0479">Metal-binding</keyword>
<keyword id="KW-0547">Nucleotide-binding</keyword>
<keyword id="KW-0665">Pyrimidine biosynthesis</keyword>
<feature type="chain" id="PRO_1000139491" description="CTP synthase">
    <location>
        <begin position="1"/>
        <end position="546"/>
    </location>
</feature>
<feature type="domain" description="Glutamine amidotransferase type-1" evidence="1">
    <location>
        <begin position="292"/>
        <end position="534"/>
    </location>
</feature>
<feature type="region of interest" description="Amidoligase domain" evidence="1">
    <location>
        <begin position="1"/>
        <end position="267"/>
    </location>
</feature>
<feature type="active site" description="Nucleophile; for glutamine hydrolysis" evidence="1">
    <location>
        <position position="381"/>
    </location>
</feature>
<feature type="active site" evidence="1">
    <location>
        <position position="507"/>
    </location>
</feature>
<feature type="active site" evidence="1">
    <location>
        <position position="509"/>
    </location>
</feature>
<feature type="binding site" evidence="1">
    <location>
        <position position="13"/>
    </location>
    <ligand>
        <name>CTP</name>
        <dbReference type="ChEBI" id="CHEBI:37563"/>
        <note>allosteric inhibitor</note>
    </ligand>
</feature>
<feature type="binding site" evidence="1">
    <location>
        <position position="13"/>
    </location>
    <ligand>
        <name>UTP</name>
        <dbReference type="ChEBI" id="CHEBI:46398"/>
    </ligand>
</feature>
<feature type="binding site" evidence="1">
    <location>
        <begin position="14"/>
        <end position="19"/>
    </location>
    <ligand>
        <name>ATP</name>
        <dbReference type="ChEBI" id="CHEBI:30616"/>
    </ligand>
</feature>
<feature type="binding site" evidence="1">
    <location>
        <position position="71"/>
    </location>
    <ligand>
        <name>ATP</name>
        <dbReference type="ChEBI" id="CHEBI:30616"/>
    </ligand>
</feature>
<feature type="binding site" evidence="1">
    <location>
        <position position="71"/>
    </location>
    <ligand>
        <name>Mg(2+)</name>
        <dbReference type="ChEBI" id="CHEBI:18420"/>
    </ligand>
</feature>
<feature type="binding site" evidence="1">
    <location>
        <position position="141"/>
    </location>
    <ligand>
        <name>Mg(2+)</name>
        <dbReference type="ChEBI" id="CHEBI:18420"/>
    </ligand>
</feature>
<feature type="binding site" evidence="1">
    <location>
        <begin position="148"/>
        <end position="150"/>
    </location>
    <ligand>
        <name>CTP</name>
        <dbReference type="ChEBI" id="CHEBI:37563"/>
        <note>allosteric inhibitor</note>
    </ligand>
</feature>
<feature type="binding site" evidence="1">
    <location>
        <begin position="188"/>
        <end position="193"/>
    </location>
    <ligand>
        <name>CTP</name>
        <dbReference type="ChEBI" id="CHEBI:37563"/>
        <note>allosteric inhibitor</note>
    </ligand>
</feature>
<feature type="binding site" evidence="1">
    <location>
        <begin position="188"/>
        <end position="193"/>
    </location>
    <ligand>
        <name>UTP</name>
        <dbReference type="ChEBI" id="CHEBI:46398"/>
    </ligand>
</feature>
<feature type="binding site" evidence="1">
    <location>
        <position position="224"/>
    </location>
    <ligand>
        <name>CTP</name>
        <dbReference type="ChEBI" id="CHEBI:37563"/>
        <note>allosteric inhibitor</note>
    </ligand>
</feature>
<feature type="binding site" evidence="1">
    <location>
        <position position="224"/>
    </location>
    <ligand>
        <name>UTP</name>
        <dbReference type="ChEBI" id="CHEBI:46398"/>
    </ligand>
</feature>
<feature type="binding site" evidence="1">
    <location>
        <position position="354"/>
    </location>
    <ligand>
        <name>L-glutamine</name>
        <dbReference type="ChEBI" id="CHEBI:58359"/>
    </ligand>
</feature>
<feature type="binding site" evidence="1">
    <location>
        <begin position="382"/>
        <end position="385"/>
    </location>
    <ligand>
        <name>L-glutamine</name>
        <dbReference type="ChEBI" id="CHEBI:58359"/>
    </ligand>
</feature>
<feature type="binding site" evidence="1">
    <location>
        <position position="405"/>
    </location>
    <ligand>
        <name>L-glutamine</name>
        <dbReference type="ChEBI" id="CHEBI:58359"/>
    </ligand>
</feature>
<feature type="binding site" evidence="1">
    <location>
        <position position="462"/>
    </location>
    <ligand>
        <name>L-glutamine</name>
        <dbReference type="ChEBI" id="CHEBI:58359"/>
    </ligand>
</feature>
<evidence type="ECO:0000255" key="1">
    <source>
        <dbReference type="HAMAP-Rule" id="MF_01227"/>
    </source>
</evidence>
<organism>
    <name type="scientific">Microcystis aeruginosa (strain NIES-843 / IAM M-2473)</name>
    <dbReference type="NCBI Taxonomy" id="449447"/>
    <lineage>
        <taxon>Bacteria</taxon>
        <taxon>Bacillati</taxon>
        <taxon>Cyanobacteriota</taxon>
        <taxon>Cyanophyceae</taxon>
        <taxon>Oscillatoriophycideae</taxon>
        <taxon>Chroococcales</taxon>
        <taxon>Microcystaceae</taxon>
        <taxon>Microcystis</taxon>
    </lineage>
</organism>
<dbReference type="EC" id="6.3.4.2" evidence="1"/>
<dbReference type="EMBL" id="AP009552">
    <property type="protein sequence ID" value="BAG01270.1"/>
    <property type="molecule type" value="Genomic_DNA"/>
</dbReference>
<dbReference type="RefSeq" id="WP_012264849.1">
    <property type="nucleotide sequence ID" value="NC_010296.1"/>
</dbReference>
<dbReference type="SMR" id="B0JU82"/>
<dbReference type="STRING" id="449447.MAE_14480"/>
<dbReference type="MEROPS" id="C26.964"/>
<dbReference type="PaxDb" id="449447-MAE_14480"/>
<dbReference type="EnsemblBacteria" id="BAG01270">
    <property type="protein sequence ID" value="BAG01270"/>
    <property type="gene ID" value="MAE_14480"/>
</dbReference>
<dbReference type="KEGG" id="mar:MAE_14480"/>
<dbReference type="PATRIC" id="fig|449447.4.peg.1329"/>
<dbReference type="eggNOG" id="COG0504">
    <property type="taxonomic scope" value="Bacteria"/>
</dbReference>
<dbReference type="HOGENOM" id="CLU_011675_5_0_3"/>
<dbReference type="BioCyc" id="MAER449447:MAE_RS06380-MONOMER"/>
<dbReference type="UniPathway" id="UPA00159">
    <property type="reaction ID" value="UER00277"/>
</dbReference>
<dbReference type="Proteomes" id="UP000001510">
    <property type="component" value="Chromosome"/>
</dbReference>
<dbReference type="GO" id="GO:0005829">
    <property type="term" value="C:cytosol"/>
    <property type="evidence" value="ECO:0007669"/>
    <property type="project" value="TreeGrafter"/>
</dbReference>
<dbReference type="GO" id="GO:0005524">
    <property type="term" value="F:ATP binding"/>
    <property type="evidence" value="ECO:0007669"/>
    <property type="project" value="UniProtKB-KW"/>
</dbReference>
<dbReference type="GO" id="GO:0003883">
    <property type="term" value="F:CTP synthase activity"/>
    <property type="evidence" value="ECO:0007669"/>
    <property type="project" value="UniProtKB-UniRule"/>
</dbReference>
<dbReference type="GO" id="GO:0004359">
    <property type="term" value="F:glutaminase activity"/>
    <property type="evidence" value="ECO:0007669"/>
    <property type="project" value="RHEA"/>
</dbReference>
<dbReference type="GO" id="GO:0042802">
    <property type="term" value="F:identical protein binding"/>
    <property type="evidence" value="ECO:0007669"/>
    <property type="project" value="TreeGrafter"/>
</dbReference>
<dbReference type="GO" id="GO:0046872">
    <property type="term" value="F:metal ion binding"/>
    <property type="evidence" value="ECO:0007669"/>
    <property type="project" value="UniProtKB-KW"/>
</dbReference>
<dbReference type="GO" id="GO:0044210">
    <property type="term" value="P:'de novo' CTP biosynthetic process"/>
    <property type="evidence" value="ECO:0007669"/>
    <property type="project" value="UniProtKB-UniRule"/>
</dbReference>
<dbReference type="GO" id="GO:0019856">
    <property type="term" value="P:pyrimidine nucleobase biosynthetic process"/>
    <property type="evidence" value="ECO:0007669"/>
    <property type="project" value="TreeGrafter"/>
</dbReference>
<dbReference type="CDD" id="cd03113">
    <property type="entry name" value="CTPS_N"/>
    <property type="match status" value="1"/>
</dbReference>
<dbReference type="CDD" id="cd01746">
    <property type="entry name" value="GATase1_CTP_Synthase"/>
    <property type="match status" value="1"/>
</dbReference>
<dbReference type="FunFam" id="3.40.50.300:FF:000009">
    <property type="entry name" value="CTP synthase"/>
    <property type="match status" value="1"/>
</dbReference>
<dbReference type="FunFam" id="3.40.50.880:FF:000002">
    <property type="entry name" value="CTP synthase"/>
    <property type="match status" value="1"/>
</dbReference>
<dbReference type="Gene3D" id="3.40.50.880">
    <property type="match status" value="1"/>
</dbReference>
<dbReference type="Gene3D" id="3.40.50.300">
    <property type="entry name" value="P-loop containing nucleotide triphosphate hydrolases"/>
    <property type="match status" value="1"/>
</dbReference>
<dbReference type="HAMAP" id="MF_01227">
    <property type="entry name" value="PyrG"/>
    <property type="match status" value="1"/>
</dbReference>
<dbReference type="InterPro" id="IPR029062">
    <property type="entry name" value="Class_I_gatase-like"/>
</dbReference>
<dbReference type="InterPro" id="IPR004468">
    <property type="entry name" value="CTP_synthase"/>
</dbReference>
<dbReference type="InterPro" id="IPR017456">
    <property type="entry name" value="CTP_synthase_N"/>
</dbReference>
<dbReference type="InterPro" id="IPR017926">
    <property type="entry name" value="GATASE"/>
</dbReference>
<dbReference type="InterPro" id="IPR033828">
    <property type="entry name" value="GATase1_CTP_Synthase"/>
</dbReference>
<dbReference type="InterPro" id="IPR027417">
    <property type="entry name" value="P-loop_NTPase"/>
</dbReference>
<dbReference type="NCBIfam" id="NF003792">
    <property type="entry name" value="PRK05380.1"/>
    <property type="match status" value="1"/>
</dbReference>
<dbReference type="NCBIfam" id="TIGR00337">
    <property type="entry name" value="PyrG"/>
    <property type="match status" value="1"/>
</dbReference>
<dbReference type="PANTHER" id="PTHR11550">
    <property type="entry name" value="CTP SYNTHASE"/>
    <property type="match status" value="1"/>
</dbReference>
<dbReference type="PANTHER" id="PTHR11550:SF0">
    <property type="entry name" value="CTP SYNTHASE-RELATED"/>
    <property type="match status" value="1"/>
</dbReference>
<dbReference type="Pfam" id="PF06418">
    <property type="entry name" value="CTP_synth_N"/>
    <property type="match status" value="1"/>
</dbReference>
<dbReference type="Pfam" id="PF00117">
    <property type="entry name" value="GATase"/>
    <property type="match status" value="1"/>
</dbReference>
<dbReference type="SUPFAM" id="SSF52317">
    <property type="entry name" value="Class I glutamine amidotransferase-like"/>
    <property type="match status" value="1"/>
</dbReference>
<dbReference type="SUPFAM" id="SSF52540">
    <property type="entry name" value="P-loop containing nucleoside triphosphate hydrolases"/>
    <property type="match status" value="1"/>
</dbReference>
<dbReference type="PROSITE" id="PS51273">
    <property type="entry name" value="GATASE_TYPE_1"/>
    <property type="match status" value="1"/>
</dbReference>
<protein>
    <recommendedName>
        <fullName evidence="1">CTP synthase</fullName>
        <ecNumber evidence="1">6.3.4.2</ecNumber>
    </recommendedName>
    <alternativeName>
        <fullName evidence="1">Cytidine 5'-triphosphate synthase</fullName>
    </alternativeName>
    <alternativeName>
        <fullName evidence="1">Cytidine triphosphate synthetase</fullName>
        <shortName evidence="1">CTP synthetase</shortName>
        <shortName evidence="1">CTPS</shortName>
    </alternativeName>
    <alternativeName>
        <fullName evidence="1">UTP--ammonia ligase</fullName>
    </alternativeName>
</protein>
<comment type="function">
    <text evidence="1">Catalyzes the ATP-dependent amination of UTP to CTP with either L-glutamine or ammonia as the source of nitrogen. Regulates intracellular CTP levels through interactions with the four ribonucleotide triphosphates.</text>
</comment>
<comment type="catalytic activity">
    <reaction evidence="1">
        <text>UTP + L-glutamine + ATP + H2O = CTP + L-glutamate + ADP + phosphate + 2 H(+)</text>
        <dbReference type="Rhea" id="RHEA:26426"/>
        <dbReference type="ChEBI" id="CHEBI:15377"/>
        <dbReference type="ChEBI" id="CHEBI:15378"/>
        <dbReference type="ChEBI" id="CHEBI:29985"/>
        <dbReference type="ChEBI" id="CHEBI:30616"/>
        <dbReference type="ChEBI" id="CHEBI:37563"/>
        <dbReference type="ChEBI" id="CHEBI:43474"/>
        <dbReference type="ChEBI" id="CHEBI:46398"/>
        <dbReference type="ChEBI" id="CHEBI:58359"/>
        <dbReference type="ChEBI" id="CHEBI:456216"/>
        <dbReference type="EC" id="6.3.4.2"/>
    </reaction>
</comment>
<comment type="catalytic activity">
    <reaction evidence="1">
        <text>L-glutamine + H2O = L-glutamate + NH4(+)</text>
        <dbReference type="Rhea" id="RHEA:15889"/>
        <dbReference type="ChEBI" id="CHEBI:15377"/>
        <dbReference type="ChEBI" id="CHEBI:28938"/>
        <dbReference type="ChEBI" id="CHEBI:29985"/>
        <dbReference type="ChEBI" id="CHEBI:58359"/>
    </reaction>
</comment>
<comment type="catalytic activity">
    <reaction evidence="1">
        <text>UTP + NH4(+) + ATP = CTP + ADP + phosphate + 2 H(+)</text>
        <dbReference type="Rhea" id="RHEA:16597"/>
        <dbReference type="ChEBI" id="CHEBI:15378"/>
        <dbReference type="ChEBI" id="CHEBI:28938"/>
        <dbReference type="ChEBI" id="CHEBI:30616"/>
        <dbReference type="ChEBI" id="CHEBI:37563"/>
        <dbReference type="ChEBI" id="CHEBI:43474"/>
        <dbReference type="ChEBI" id="CHEBI:46398"/>
        <dbReference type="ChEBI" id="CHEBI:456216"/>
    </reaction>
</comment>
<comment type="activity regulation">
    <text evidence="1">Allosterically activated by GTP, when glutamine is the substrate; GTP has no effect on the reaction when ammonia is the substrate. The allosteric effector GTP functions by stabilizing the protein conformation that binds the tetrahedral intermediate(s) formed during glutamine hydrolysis. Inhibited by the product CTP, via allosteric rather than competitive inhibition.</text>
</comment>
<comment type="pathway">
    <text evidence="1">Pyrimidine metabolism; CTP biosynthesis via de novo pathway; CTP from UDP: step 2/2.</text>
</comment>
<comment type="subunit">
    <text evidence="1">Homotetramer.</text>
</comment>
<comment type="miscellaneous">
    <text evidence="1">CTPSs have evolved a hybrid strategy for distinguishing between UTP and CTP. The overlapping regions of the product feedback inhibitory and substrate sites recognize a common feature in both compounds, the triphosphate moiety. To differentiate isosteric substrate and product pyrimidine rings, an additional pocket far from the expected kinase/ligase catalytic site, specifically recognizes the cytosine and ribose portions of the product inhibitor.</text>
</comment>
<comment type="similarity">
    <text evidence="1">Belongs to the CTP synthase family.</text>
</comment>
<name>PYRG_MICAN</name>
<sequence>MSKFVFVTGGVVSSIGKGIVAASLGRLLKSRDYSVSILKLDPYINVDPGTMSPFQHGEVFVTDDGAETDLDLGHYERFTDTELSRLNSVTTGSIYQAVLNKERRGAYMGGTVQVIPHVTNEIKERILRVAKDTNPDIVITEIGGTVGDIESLPFLEAIRQFRKDVGRNNVVYMHVTLIPWIPAAKEMKTKPTQHSVKELRSIGIQPDVLVCRCHLPLQPGLKEKLSAFCDVPVESVITAQDASSIYEVPLNLEKEGLAQQTLELLNLGPRYPHLEEWENLIRQMQSPGQKLEIAIVGKYVQLGDAYLSVVEALKHAAIALNSEIELRWVSAEDVDNDSAEAHLSGVDGIVVPGGFGIRGVDGKIKAIEYARVNNIPFLGLCLGMQCSIIEWGRNVARLERANSSEFEEDTPNPVINLLPEQADVVDLGGTMRLGLYPCRLNPDSLAFSLYGQEVIYERHRHRYEFNNAYRSLFFETGYLVSGTSPDGRLVEIIELPKHPFFIATQFHPEFRSRPNKAHPLFSGFMKAALKGREEKFSLSSQHSAVS</sequence>
<reference key="1">
    <citation type="journal article" date="2007" name="DNA Res.">
        <title>Complete genomic structure of the bloom-forming toxic cyanobacterium Microcystis aeruginosa NIES-843.</title>
        <authorList>
            <person name="Kaneko T."/>
            <person name="Nakajima N."/>
            <person name="Okamoto S."/>
            <person name="Suzuki I."/>
            <person name="Tanabe Y."/>
            <person name="Tamaoki M."/>
            <person name="Nakamura Y."/>
            <person name="Kasai F."/>
            <person name="Watanabe A."/>
            <person name="Kawashima K."/>
            <person name="Kishida Y."/>
            <person name="Ono A."/>
            <person name="Shimizu Y."/>
            <person name="Takahashi C."/>
            <person name="Minami C."/>
            <person name="Fujishiro T."/>
            <person name="Kohara M."/>
            <person name="Katoh M."/>
            <person name="Nakazaki N."/>
            <person name="Nakayama S."/>
            <person name="Yamada M."/>
            <person name="Tabata S."/>
            <person name="Watanabe M.M."/>
        </authorList>
    </citation>
    <scope>NUCLEOTIDE SEQUENCE [LARGE SCALE GENOMIC DNA]</scope>
    <source>
        <strain>NIES-843 / IAM M-247</strain>
    </source>
</reference>
<gene>
    <name evidence="1" type="primary">pyrG</name>
    <name type="ordered locus">MAE_14480</name>
</gene>
<proteinExistence type="inferred from homology"/>
<accession>B0JU82</accession>